<comment type="similarity">
    <text evidence="1">Belongs to the BetVI family.</text>
</comment>
<keyword id="KW-0568">Pathogenesis-related protein</keyword>
<keyword id="KW-0611">Plant defense</keyword>
<protein>
    <recommendedName>
        <fullName>Pathogenesis-related protein A</fullName>
    </recommendedName>
    <alternativeName>
        <fullName>PR1-1</fullName>
    </alternativeName>
</protein>
<sequence>MGVQKSEVETTSSVSAEKLFKGLCLDIDTLLPQVLPGAIKSSETLEGDGGVGTVKLVHLGDASPFKTMKQKVDAIDKATFTYSYSIIDGDILLGFIESINNHFTAVPNADGGCTVKSTIIFNTKGDAVVPEENIKFANDQNLTIFKAVEAYLIAN</sequence>
<name>PR11_PETCR</name>
<gene>
    <name type="primary">PCPR1-1</name>
</gene>
<gene>
    <name type="primary">PCPR1-2</name>
</gene>
<feature type="chain" id="PRO_0000154162" description="Pathogenesis-related protein A">
    <location>
        <begin position="1"/>
        <end position="155"/>
    </location>
</feature>
<dbReference type="EMBL" id="X12574">
    <property type="protein sequence ID" value="CAA31086.1"/>
    <property type="molecule type" value="mRNA"/>
</dbReference>
<dbReference type="EMBL" id="U48862">
    <property type="protein sequence ID" value="AAB47234.1"/>
    <property type="molecule type" value="Genomic_DNA"/>
</dbReference>
<dbReference type="PIR" id="S04552">
    <property type="entry name" value="S04552"/>
</dbReference>
<dbReference type="SMR" id="P19417"/>
<dbReference type="GO" id="GO:0005737">
    <property type="term" value="C:cytoplasm"/>
    <property type="evidence" value="ECO:0007669"/>
    <property type="project" value="TreeGrafter"/>
</dbReference>
<dbReference type="GO" id="GO:0005634">
    <property type="term" value="C:nucleus"/>
    <property type="evidence" value="ECO:0007669"/>
    <property type="project" value="TreeGrafter"/>
</dbReference>
<dbReference type="GO" id="GO:0010427">
    <property type="term" value="F:abscisic acid binding"/>
    <property type="evidence" value="ECO:0007669"/>
    <property type="project" value="InterPro"/>
</dbReference>
<dbReference type="GO" id="GO:0004864">
    <property type="term" value="F:protein phosphatase inhibitor activity"/>
    <property type="evidence" value="ECO:0007669"/>
    <property type="project" value="InterPro"/>
</dbReference>
<dbReference type="GO" id="GO:0038023">
    <property type="term" value="F:signaling receptor activity"/>
    <property type="evidence" value="ECO:0007669"/>
    <property type="project" value="InterPro"/>
</dbReference>
<dbReference type="GO" id="GO:0009738">
    <property type="term" value="P:abscisic acid-activated signaling pathway"/>
    <property type="evidence" value="ECO:0007669"/>
    <property type="project" value="InterPro"/>
</dbReference>
<dbReference type="GO" id="GO:0006952">
    <property type="term" value="P:defense response"/>
    <property type="evidence" value="ECO:0007669"/>
    <property type="project" value="UniProtKB-KW"/>
</dbReference>
<dbReference type="CDD" id="cd07816">
    <property type="entry name" value="Bet_v1-like"/>
    <property type="match status" value="1"/>
</dbReference>
<dbReference type="FunFam" id="3.30.530.20:FF:000007">
    <property type="entry name" value="Major pollen allergen Bet v 1-A"/>
    <property type="match status" value="1"/>
</dbReference>
<dbReference type="Gene3D" id="3.30.530.20">
    <property type="match status" value="1"/>
</dbReference>
<dbReference type="InterPro" id="IPR000916">
    <property type="entry name" value="Bet_v_I/MLP"/>
</dbReference>
<dbReference type="InterPro" id="IPR024949">
    <property type="entry name" value="Bet_v_I_allergen"/>
</dbReference>
<dbReference type="InterPro" id="IPR050279">
    <property type="entry name" value="Plant_def-hormone_signal"/>
</dbReference>
<dbReference type="InterPro" id="IPR023393">
    <property type="entry name" value="START-like_dom_sf"/>
</dbReference>
<dbReference type="PANTHER" id="PTHR31213">
    <property type="entry name" value="OS08G0374000 PROTEIN-RELATED"/>
    <property type="match status" value="1"/>
</dbReference>
<dbReference type="PANTHER" id="PTHR31213:SF55">
    <property type="entry name" value="STRESS-INDUCED PROTEIN SAM22"/>
    <property type="match status" value="1"/>
</dbReference>
<dbReference type="Pfam" id="PF00407">
    <property type="entry name" value="Bet_v_1"/>
    <property type="match status" value="1"/>
</dbReference>
<dbReference type="PRINTS" id="PR00634">
    <property type="entry name" value="BETALLERGEN"/>
</dbReference>
<dbReference type="SMART" id="SM01037">
    <property type="entry name" value="Bet_v_1"/>
    <property type="match status" value="1"/>
</dbReference>
<dbReference type="SUPFAM" id="SSF55961">
    <property type="entry name" value="Bet v1-like"/>
    <property type="match status" value="1"/>
</dbReference>
<dbReference type="PROSITE" id="PS00451">
    <property type="entry name" value="PATHOGENESIS_BETVI"/>
    <property type="match status" value="1"/>
</dbReference>
<evidence type="ECO:0000305" key="1"/>
<reference key="1">
    <citation type="journal article" date="1988" name="Mol. Gen. Genet.">
        <title>Gene structure and in situ transcript localization of pathogenesis-related protein 1 in parsley.</title>
        <authorList>
            <person name="Somssich I.E."/>
            <person name="Schmelzer E."/>
            <person name="Kawalleck P."/>
            <person name="Hahlbrock K."/>
        </authorList>
    </citation>
    <scope>NUCLEOTIDE SEQUENCE [MRNA]</scope>
</reference>
<reference key="2">
    <citation type="journal article" date="1996" name="EMBO J.">
        <title>Interaction of elicitor-induced DNA-binding proteins with elicitor response elements in the promoters of parsley PR1 genes.</title>
        <authorList>
            <person name="Rushton P.J."/>
            <person name="Torres J.T."/>
            <person name="Parniske M."/>
            <person name="Wernert P."/>
            <person name="Hahlbrock K."/>
            <person name="Somssich I.E."/>
        </authorList>
    </citation>
    <scope>NUCLEOTIDE SEQUENCE [GENOMIC DNA]</scope>
</reference>
<proteinExistence type="evidence at transcript level"/>
<organism>
    <name type="scientific">Petroselinum crispum</name>
    <name type="common">Parsley</name>
    <name type="synonym">Petroselinum hortense</name>
    <dbReference type="NCBI Taxonomy" id="4043"/>
    <lineage>
        <taxon>Eukaryota</taxon>
        <taxon>Viridiplantae</taxon>
        <taxon>Streptophyta</taxon>
        <taxon>Embryophyta</taxon>
        <taxon>Tracheophyta</taxon>
        <taxon>Spermatophyta</taxon>
        <taxon>Magnoliopsida</taxon>
        <taxon>eudicotyledons</taxon>
        <taxon>Gunneridae</taxon>
        <taxon>Pentapetalae</taxon>
        <taxon>asterids</taxon>
        <taxon>campanulids</taxon>
        <taxon>Apiales</taxon>
        <taxon>Apiaceae</taxon>
        <taxon>Apioideae</taxon>
        <taxon>apioid superclade</taxon>
        <taxon>Apieae</taxon>
        <taxon>Petroselinum</taxon>
    </lineage>
</organism>
<accession>P19417</accession>